<gene>
    <name evidence="1" type="primary">rppH</name>
    <name evidence="1" type="synonym">nudH</name>
    <name type="ordered locus">HPAG1_1170</name>
</gene>
<organism>
    <name type="scientific">Helicobacter pylori (strain HPAG1)</name>
    <dbReference type="NCBI Taxonomy" id="357544"/>
    <lineage>
        <taxon>Bacteria</taxon>
        <taxon>Pseudomonadati</taxon>
        <taxon>Campylobacterota</taxon>
        <taxon>Epsilonproteobacteria</taxon>
        <taxon>Campylobacterales</taxon>
        <taxon>Helicobacteraceae</taxon>
        <taxon>Helicobacter</taxon>
    </lineage>
</organism>
<accession>Q1CS35</accession>
<protein>
    <recommendedName>
        <fullName evidence="1">RNA pyrophosphohydrolase</fullName>
        <ecNumber evidence="1">3.6.1.-</ecNumber>
    </recommendedName>
    <alternativeName>
        <fullName evidence="1">(Di)nucleoside polyphosphate hydrolase</fullName>
    </alternativeName>
</protein>
<dbReference type="EC" id="3.6.1.-" evidence="1"/>
<dbReference type="EMBL" id="CP000241">
    <property type="protein sequence ID" value="ABF85237.1"/>
    <property type="molecule type" value="Genomic_DNA"/>
</dbReference>
<dbReference type="RefSeq" id="WP_000902585.1">
    <property type="nucleotide sequence ID" value="NC_008086.1"/>
</dbReference>
<dbReference type="SMR" id="Q1CS35"/>
<dbReference type="KEGG" id="hpa:HPAG1_1170"/>
<dbReference type="HOGENOM" id="CLU_087195_3_0_7"/>
<dbReference type="GO" id="GO:0005737">
    <property type="term" value="C:cytoplasm"/>
    <property type="evidence" value="ECO:0007669"/>
    <property type="project" value="TreeGrafter"/>
</dbReference>
<dbReference type="GO" id="GO:0034353">
    <property type="term" value="F:mRNA 5'-diphosphatase activity"/>
    <property type="evidence" value="ECO:0007669"/>
    <property type="project" value="TreeGrafter"/>
</dbReference>
<dbReference type="GO" id="GO:0006402">
    <property type="term" value="P:mRNA catabolic process"/>
    <property type="evidence" value="ECO:0007669"/>
    <property type="project" value="TreeGrafter"/>
</dbReference>
<dbReference type="CDD" id="cd03671">
    <property type="entry name" value="NUDIX_Ap4A_hydrolase_plant_like"/>
    <property type="match status" value="1"/>
</dbReference>
<dbReference type="FunFam" id="3.90.79.10:FF:000084">
    <property type="entry name" value="RNA pyrophosphohydrolase"/>
    <property type="match status" value="1"/>
</dbReference>
<dbReference type="Gene3D" id="3.90.79.10">
    <property type="entry name" value="Nucleoside Triphosphate Pyrophosphohydrolase"/>
    <property type="match status" value="1"/>
</dbReference>
<dbReference type="HAMAP" id="MF_00298">
    <property type="entry name" value="Nudix_RppH"/>
    <property type="match status" value="1"/>
</dbReference>
<dbReference type="InterPro" id="IPR020476">
    <property type="entry name" value="Nudix_hydrolase"/>
</dbReference>
<dbReference type="InterPro" id="IPR015797">
    <property type="entry name" value="NUDIX_hydrolase-like_dom_sf"/>
</dbReference>
<dbReference type="InterPro" id="IPR020084">
    <property type="entry name" value="NUDIX_hydrolase_CS"/>
</dbReference>
<dbReference type="InterPro" id="IPR000086">
    <property type="entry name" value="NUDIX_hydrolase_dom"/>
</dbReference>
<dbReference type="InterPro" id="IPR022927">
    <property type="entry name" value="RppH"/>
</dbReference>
<dbReference type="NCBIfam" id="NF001936">
    <property type="entry name" value="PRK00714.1-3"/>
    <property type="match status" value="1"/>
</dbReference>
<dbReference type="NCBIfam" id="NF001938">
    <property type="entry name" value="PRK00714.1-5"/>
    <property type="match status" value="1"/>
</dbReference>
<dbReference type="PANTHER" id="PTHR23114">
    <property type="entry name" value="M7GPPPN-MRNA HYDROLASE"/>
    <property type="match status" value="1"/>
</dbReference>
<dbReference type="PANTHER" id="PTHR23114:SF17">
    <property type="entry name" value="M7GPPPN-MRNA HYDROLASE"/>
    <property type="match status" value="1"/>
</dbReference>
<dbReference type="Pfam" id="PF00293">
    <property type="entry name" value="NUDIX"/>
    <property type="match status" value="1"/>
</dbReference>
<dbReference type="PRINTS" id="PR00502">
    <property type="entry name" value="NUDIXFAMILY"/>
</dbReference>
<dbReference type="SUPFAM" id="SSF55811">
    <property type="entry name" value="Nudix"/>
    <property type="match status" value="1"/>
</dbReference>
<dbReference type="PROSITE" id="PS51462">
    <property type="entry name" value="NUDIX"/>
    <property type="match status" value="1"/>
</dbReference>
<dbReference type="PROSITE" id="PS00893">
    <property type="entry name" value="NUDIX_BOX"/>
    <property type="match status" value="1"/>
</dbReference>
<proteinExistence type="inferred from homology"/>
<comment type="function">
    <text evidence="1">Accelerates the degradation of transcripts by removing pyrophosphate from the 5'-end of triphosphorylated RNA, leading to a more labile monophosphorylated state that can stimulate subsequent ribonuclease cleavage.</text>
</comment>
<comment type="cofactor">
    <cofactor evidence="1">
        <name>a divalent metal cation</name>
        <dbReference type="ChEBI" id="CHEBI:60240"/>
    </cofactor>
</comment>
<comment type="similarity">
    <text evidence="1">Belongs to the Nudix hydrolase family. RppH subfamily.</text>
</comment>
<sequence>MLHKKYRPNVAAIIMSPDYPNTCEVFIAERIDIEGAWQFPQGGIDEGETPLEALHRELLEEIGTNEIEILAQYPRWIAYDFPSNMEHKFYAFDGQKQRYFLVRLKHANNIDLNKHTPEFRAYQFIHLKDLLKKIVPFKRQVYRQVIAYFKREGYL</sequence>
<reference key="1">
    <citation type="journal article" date="2006" name="Proc. Natl. Acad. Sci. U.S.A.">
        <title>The complete genome sequence of a chronic atrophic gastritis Helicobacter pylori strain: evolution during disease progression.</title>
        <authorList>
            <person name="Oh J.D."/>
            <person name="Kling-Baeckhed H."/>
            <person name="Giannakis M."/>
            <person name="Xu J."/>
            <person name="Fulton R.S."/>
            <person name="Fulton L.A."/>
            <person name="Cordum H.S."/>
            <person name="Wang C."/>
            <person name="Elliott G."/>
            <person name="Edwards J."/>
            <person name="Mardis E.R."/>
            <person name="Engstrand L.G."/>
            <person name="Gordon J.I."/>
        </authorList>
    </citation>
    <scope>NUCLEOTIDE SEQUENCE [LARGE SCALE GENOMIC DNA]</scope>
    <source>
        <strain>HPAG1</strain>
    </source>
</reference>
<feature type="chain" id="PRO_1000021955" description="RNA pyrophosphohydrolase">
    <location>
        <begin position="1"/>
        <end position="155"/>
    </location>
</feature>
<feature type="domain" description="Nudix hydrolase" evidence="1">
    <location>
        <begin position="5"/>
        <end position="147"/>
    </location>
</feature>
<feature type="short sequence motif" description="Nudix box">
    <location>
        <begin position="42"/>
        <end position="63"/>
    </location>
</feature>
<keyword id="KW-0378">Hydrolase</keyword>
<name>RPPH_HELPH</name>
<evidence type="ECO:0000255" key="1">
    <source>
        <dbReference type="HAMAP-Rule" id="MF_00298"/>
    </source>
</evidence>